<proteinExistence type="inferred from homology"/>
<protein>
    <recommendedName>
        <fullName evidence="1">Phosphoribosylaminoimidazole-succinocarboxamide synthase</fullName>
        <ecNumber evidence="1">6.3.2.6</ecNumber>
    </recommendedName>
    <alternativeName>
        <fullName evidence="1">SAICAR synthetase</fullName>
    </alternativeName>
</protein>
<evidence type="ECO:0000255" key="1">
    <source>
        <dbReference type="HAMAP-Rule" id="MF_00137"/>
    </source>
</evidence>
<name>PUR7_RHOJR</name>
<gene>
    <name evidence="1" type="primary">purC</name>
    <name type="ordered locus">RHA1_ro04817</name>
</gene>
<keyword id="KW-0067">ATP-binding</keyword>
<keyword id="KW-0436">Ligase</keyword>
<keyword id="KW-0547">Nucleotide-binding</keyword>
<keyword id="KW-0658">Purine biosynthesis</keyword>
<sequence length="294" mass="32018">MRPSLDSYAHLAGGKVRDLYTIDDEHLLLVASDRISAYDHVLSTPIPDKGRVLTAMSVFFFGVLGGNNHLAGEPDDSRIPEEVLGRALVVRKLDMVPVECVARGYLTGSGLLDYNETGAVCGVALPEGLVEASQLPDPIFTPASKAELGEHDENISFEAVVEKVGQDLAVKLRDDTLDIYGRASNFAADRGIILADTKLEFGLDPQGNLVLADEVLTPDSSRYWPADGYEAGKVQPSFDKQFVRNWLTGPESGWDRASDTPPPPLPAEIVEATRERYIEAYERISGLSFADWVG</sequence>
<dbReference type="EC" id="6.3.2.6" evidence="1"/>
<dbReference type="EMBL" id="CP000431">
    <property type="protein sequence ID" value="ABG96602.1"/>
    <property type="molecule type" value="Genomic_DNA"/>
</dbReference>
<dbReference type="RefSeq" id="WP_009477882.1">
    <property type="nucleotide sequence ID" value="NC_008268.1"/>
</dbReference>
<dbReference type="SMR" id="Q0S784"/>
<dbReference type="KEGG" id="rha:RHA1_ro04817"/>
<dbReference type="eggNOG" id="COG0152">
    <property type="taxonomic scope" value="Bacteria"/>
</dbReference>
<dbReference type="HOGENOM" id="CLU_045637_0_0_11"/>
<dbReference type="OrthoDB" id="9801549at2"/>
<dbReference type="UniPathway" id="UPA00074">
    <property type="reaction ID" value="UER00131"/>
</dbReference>
<dbReference type="Proteomes" id="UP000008710">
    <property type="component" value="Chromosome"/>
</dbReference>
<dbReference type="GO" id="GO:0005737">
    <property type="term" value="C:cytoplasm"/>
    <property type="evidence" value="ECO:0007669"/>
    <property type="project" value="TreeGrafter"/>
</dbReference>
<dbReference type="GO" id="GO:0005524">
    <property type="term" value="F:ATP binding"/>
    <property type="evidence" value="ECO:0007669"/>
    <property type="project" value="UniProtKB-KW"/>
</dbReference>
<dbReference type="GO" id="GO:0004639">
    <property type="term" value="F:phosphoribosylaminoimidazolesuccinocarboxamide synthase activity"/>
    <property type="evidence" value="ECO:0007669"/>
    <property type="project" value="UniProtKB-UniRule"/>
</dbReference>
<dbReference type="GO" id="GO:0006189">
    <property type="term" value="P:'de novo' IMP biosynthetic process"/>
    <property type="evidence" value="ECO:0007669"/>
    <property type="project" value="UniProtKB-UniRule"/>
</dbReference>
<dbReference type="CDD" id="cd01414">
    <property type="entry name" value="SAICAR_synt_Sc"/>
    <property type="match status" value="1"/>
</dbReference>
<dbReference type="FunFam" id="3.30.470.20:FF:000015">
    <property type="entry name" value="Phosphoribosylaminoimidazole-succinocarboxamide synthase"/>
    <property type="match status" value="1"/>
</dbReference>
<dbReference type="Gene3D" id="3.30.470.20">
    <property type="entry name" value="ATP-grasp fold, B domain"/>
    <property type="match status" value="1"/>
</dbReference>
<dbReference type="Gene3D" id="3.30.200.20">
    <property type="entry name" value="Phosphorylase Kinase, domain 1"/>
    <property type="match status" value="1"/>
</dbReference>
<dbReference type="HAMAP" id="MF_00137">
    <property type="entry name" value="SAICAR_synth"/>
    <property type="match status" value="1"/>
</dbReference>
<dbReference type="InterPro" id="IPR028923">
    <property type="entry name" value="SAICAR_synt/ADE2_N"/>
</dbReference>
<dbReference type="InterPro" id="IPR001636">
    <property type="entry name" value="SAICAR_synth"/>
</dbReference>
<dbReference type="InterPro" id="IPR018236">
    <property type="entry name" value="SAICAR_synthetase_CS"/>
</dbReference>
<dbReference type="NCBIfam" id="NF010568">
    <property type="entry name" value="PRK13961.1"/>
    <property type="match status" value="1"/>
</dbReference>
<dbReference type="NCBIfam" id="TIGR00081">
    <property type="entry name" value="purC"/>
    <property type="match status" value="1"/>
</dbReference>
<dbReference type="PANTHER" id="PTHR43700">
    <property type="entry name" value="PHOSPHORIBOSYLAMINOIMIDAZOLE-SUCCINOCARBOXAMIDE SYNTHASE"/>
    <property type="match status" value="1"/>
</dbReference>
<dbReference type="PANTHER" id="PTHR43700:SF1">
    <property type="entry name" value="PHOSPHORIBOSYLAMINOIMIDAZOLE-SUCCINOCARBOXAMIDE SYNTHASE"/>
    <property type="match status" value="1"/>
</dbReference>
<dbReference type="Pfam" id="PF01259">
    <property type="entry name" value="SAICAR_synt"/>
    <property type="match status" value="1"/>
</dbReference>
<dbReference type="SUPFAM" id="SSF56104">
    <property type="entry name" value="SAICAR synthase-like"/>
    <property type="match status" value="1"/>
</dbReference>
<dbReference type="PROSITE" id="PS01057">
    <property type="entry name" value="SAICAR_SYNTHETASE_1"/>
    <property type="match status" value="1"/>
</dbReference>
<dbReference type="PROSITE" id="PS01058">
    <property type="entry name" value="SAICAR_SYNTHETASE_2"/>
    <property type="match status" value="1"/>
</dbReference>
<organism>
    <name type="scientific">Rhodococcus jostii (strain RHA1)</name>
    <dbReference type="NCBI Taxonomy" id="101510"/>
    <lineage>
        <taxon>Bacteria</taxon>
        <taxon>Bacillati</taxon>
        <taxon>Actinomycetota</taxon>
        <taxon>Actinomycetes</taxon>
        <taxon>Mycobacteriales</taxon>
        <taxon>Nocardiaceae</taxon>
        <taxon>Rhodococcus</taxon>
    </lineage>
</organism>
<comment type="catalytic activity">
    <reaction evidence="1">
        <text>5-amino-1-(5-phospho-D-ribosyl)imidazole-4-carboxylate + L-aspartate + ATP = (2S)-2-[5-amino-1-(5-phospho-beta-D-ribosyl)imidazole-4-carboxamido]succinate + ADP + phosphate + 2 H(+)</text>
        <dbReference type="Rhea" id="RHEA:22628"/>
        <dbReference type="ChEBI" id="CHEBI:15378"/>
        <dbReference type="ChEBI" id="CHEBI:29991"/>
        <dbReference type="ChEBI" id="CHEBI:30616"/>
        <dbReference type="ChEBI" id="CHEBI:43474"/>
        <dbReference type="ChEBI" id="CHEBI:58443"/>
        <dbReference type="ChEBI" id="CHEBI:77657"/>
        <dbReference type="ChEBI" id="CHEBI:456216"/>
        <dbReference type="EC" id="6.3.2.6"/>
    </reaction>
</comment>
<comment type="pathway">
    <text evidence="1">Purine metabolism; IMP biosynthesis via de novo pathway; 5-amino-1-(5-phospho-D-ribosyl)imidazole-4-carboxamide from 5-amino-1-(5-phospho-D-ribosyl)imidazole-4-carboxylate: step 1/2.</text>
</comment>
<comment type="similarity">
    <text evidence="1">Belongs to the SAICAR synthetase family.</text>
</comment>
<accession>Q0S784</accession>
<feature type="chain" id="PRO_1000018768" description="Phosphoribosylaminoimidazole-succinocarboxamide synthase">
    <location>
        <begin position="1"/>
        <end position="294"/>
    </location>
</feature>
<reference key="1">
    <citation type="journal article" date="2006" name="Proc. Natl. Acad. Sci. U.S.A.">
        <title>The complete genome of Rhodococcus sp. RHA1 provides insights into a catabolic powerhouse.</title>
        <authorList>
            <person name="McLeod M.P."/>
            <person name="Warren R.L."/>
            <person name="Hsiao W.W.L."/>
            <person name="Araki N."/>
            <person name="Myhre M."/>
            <person name="Fernandes C."/>
            <person name="Miyazawa D."/>
            <person name="Wong W."/>
            <person name="Lillquist A.L."/>
            <person name="Wang D."/>
            <person name="Dosanjh M."/>
            <person name="Hara H."/>
            <person name="Petrescu A."/>
            <person name="Morin R.D."/>
            <person name="Yang G."/>
            <person name="Stott J.M."/>
            <person name="Schein J.E."/>
            <person name="Shin H."/>
            <person name="Smailus D."/>
            <person name="Siddiqui A.S."/>
            <person name="Marra M.A."/>
            <person name="Jones S.J.M."/>
            <person name="Holt R."/>
            <person name="Brinkman F.S.L."/>
            <person name="Miyauchi K."/>
            <person name="Fukuda M."/>
            <person name="Davies J.E."/>
            <person name="Mohn W.W."/>
            <person name="Eltis L.D."/>
        </authorList>
    </citation>
    <scope>NUCLEOTIDE SEQUENCE [LARGE SCALE GENOMIC DNA]</scope>
    <source>
        <strain>RHA1</strain>
    </source>
</reference>